<name>COXX_STAAT</name>
<proteinExistence type="inferred from homology"/>
<protein>
    <recommendedName>
        <fullName evidence="1">Protoheme IX farnesyltransferase</fullName>
        <ecNumber evidence="1">2.5.1.141</ecNumber>
    </recommendedName>
    <alternativeName>
        <fullName evidence="1">Heme B farnesyltransferase</fullName>
    </alternativeName>
    <alternativeName>
        <fullName evidence="1">Heme O synthase</fullName>
    </alternativeName>
</protein>
<feature type="chain" id="PRO_0000346077" description="Protoheme IX farnesyltransferase">
    <location>
        <begin position="1"/>
        <end position="303"/>
    </location>
</feature>
<feature type="transmembrane region" description="Helical" evidence="1">
    <location>
        <begin position="25"/>
        <end position="45"/>
    </location>
</feature>
<feature type="transmembrane region" description="Helical" evidence="1">
    <location>
        <begin position="54"/>
        <end position="74"/>
    </location>
</feature>
<feature type="transmembrane region" description="Helical" evidence="1">
    <location>
        <begin position="104"/>
        <end position="124"/>
    </location>
</feature>
<feature type="transmembrane region" description="Helical" evidence="1">
    <location>
        <begin position="125"/>
        <end position="145"/>
    </location>
</feature>
<feature type="transmembrane region" description="Helical" evidence="1">
    <location>
        <begin position="151"/>
        <end position="171"/>
    </location>
</feature>
<feature type="transmembrane region" description="Helical" evidence="1">
    <location>
        <begin position="179"/>
        <end position="199"/>
    </location>
</feature>
<feature type="transmembrane region" description="Helical" evidence="1">
    <location>
        <begin position="227"/>
        <end position="247"/>
    </location>
</feature>
<feature type="transmembrane region" description="Helical" evidence="1">
    <location>
        <begin position="248"/>
        <end position="268"/>
    </location>
</feature>
<feature type="transmembrane region" description="Helical" evidence="1">
    <location>
        <begin position="280"/>
        <end position="300"/>
    </location>
</feature>
<reference key="1">
    <citation type="journal article" date="2007" name="BMC Microbiol.">
        <title>Subtle genetic changes enhance virulence of methicillin resistant and sensitive Staphylococcus aureus.</title>
        <authorList>
            <person name="Highlander S.K."/>
            <person name="Hulten K.G."/>
            <person name="Qin X."/>
            <person name="Jiang H."/>
            <person name="Yerrapragada S."/>
            <person name="Mason E.O. Jr."/>
            <person name="Shang Y."/>
            <person name="Williams T.M."/>
            <person name="Fortunov R.M."/>
            <person name="Liu Y."/>
            <person name="Igboeli O."/>
            <person name="Petrosino J."/>
            <person name="Tirumalai M."/>
            <person name="Uzman A."/>
            <person name="Fox G.E."/>
            <person name="Cardenas A.M."/>
            <person name="Muzny D.M."/>
            <person name="Hemphill L."/>
            <person name="Ding Y."/>
            <person name="Dugan S."/>
            <person name="Blyth P.R."/>
            <person name="Buhay C.J."/>
            <person name="Dinh H.H."/>
            <person name="Hawes A.C."/>
            <person name="Holder M."/>
            <person name="Kovar C.L."/>
            <person name="Lee S.L."/>
            <person name="Liu W."/>
            <person name="Nazareth L.V."/>
            <person name="Wang Q."/>
            <person name="Zhou J."/>
            <person name="Kaplan S.L."/>
            <person name="Weinstock G.M."/>
        </authorList>
    </citation>
    <scope>NUCLEOTIDE SEQUENCE [LARGE SCALE GENOMIC DNA]</scope>
    <source>
        <strain>USA300 / TCH1516</strain>
    </source>
</reference>
<comment type="function">
    <text evidence="1">Converts heme B (protoheme IX) to heme O by substitution of the vinyl group on carbon 2 of heme B porphyrin ring with a hydroxyethyl farnesyl side group.</text>
</comment>
<comment type="catalytic activity">
    <reaction evidence="1">
        <text>heme b + (2E,6E)-farnesyl diphosphate + H2O = Fe(II)-heme o + diphosphate</text>
        <dbReference type="Rhea" id="RHEA:28070"/>
        <dbReference type="ChEBI" id="CHEBI:15377"/>
        <dbReference type="ChEBI" id="CHEBI:33019"/>
        <dbReference type="ChEBI" id="CHEBI:60344"/>
        <dbReference type="ChEBI" id="CHEBI:60530"/>
        <dbReference type="ChEBI" id="CHEBI:175763"/>
        <dbReference type="EC" id="2.5.1.141"/>
    </reaction>
</comment>
<comment type="pathway">
    <text evidence="1">Porphyrin-containing compound metabolism; heme O biosynthesis; heme O from protoheme: step 1/1.</text>
</comment>
<comment type="subunit">
    <text evidence="1">Interacts with CtaA.</text>
</comment>
<comment type="subcellular location">
    <subcellularLocation>
        <location evidence="1">Cell membrane</location>
        <topology evidence="1">Multi-pass membrane protein</topology>
    </subcellularLocation>
</comment>
<comment type="miscellaneous">
    <text evidence="1">Carbon 2 of the heme B porphyrin ring is defined according to the Fischer nomenclature.</text>
</comment>
<comment type="similarity">
    <text evidence="1">Belongs to the UbiA prenyltransferase family. Protoheme IX farnesyltransferase subfamily.</text>
</comment>
<sequence>MSKEHTLSQNISRVNFKELQQIIKMGLVQGNLIPAFAGAWLAVVMTNHSFLSSIPQILLMLFGSTLIMGGACALNNYYDQDIDRIMPSKQNRPTVNNRITDQNLLLLSFGMMLVGEICLFLLNIPSGVLGLMGIVGYVSYYSIWSKRHTTWNTVIGSFPGAVPPLIGWVAIEGQISLTAIALFLVVFCWQPIHFYALAIKRKDEYALANIPMLPSVKGFKRTRVSMFIWLIILLPVPLLLINLGVVFVVLATLLNLGWIALGLTTFKKNSDQTKWATQMFIYSLNYLVIFFVLAVIVSLLTLI</sequence>
<dbReference type="EC" id="2.5.1.141" evidence="1"/>
<dbReference type="EMBL" id="CP000730">
    <property type="protein sequence ID" value="ABX29074.1"/>
    <property type="molecule type" value="Genomic_DNA"/>
</dbReference>
<dbReference type="SMR" id="A8Z1Q1"/>
<dbReference type="KEGG" id="sax:USA300HOU_1054"/>
<dbReference type="HOGENOM" id="CLU_029631_0_0_9"/>
<dbReference type="UniPathway" id="UPA00834">
    <property type="reaction ID" value="UER00712"/>
</dbReference>
<dbReference type="GO" id="GO:0005886">
    <property type="term" value="C:plasma membrane"/>
    <property type="evidence" value="ECO:0007669"/>
    <property type="project" value="UniProtKB-SubCell"/>
</dbReference>
<dbReference type="GO" id="GO:0008495">
    <property type="term" value="F:protoheme IX farnesyltransferase activity"/>
    <property type="evidence" value="ECO:0007669"/>
    <property type="project" value="UniProtKB-UniRule"/>
</dbReference>
<dbReference type="GO" id="GO:0048034">
    <property type="term" value="P:heme O biosynthetic process"/>
    <property type="evidence" value="ECO:0007669"/>
    <property type="project" value="UniProtKB-UniRule"/>
</dbReference>
<dbReference type="CDD" id="cd13957">
    <property type="entry name" value="PT_UbiA_Cox10"/>
    <property type="match status" value="1"/>
</dbReference>
<dbReference type="Gene3D" id="1.10.357.140">
    <property type="entry name" value="UbiA prenyltransferase"/>
    <property type="match status" value="1"/>
</dbReference>
<dbReference type="HAMAP" id="MF_00154">
    <property type="entry name" value="CyoE_CtaB"/>
    <property type="match status" value="1"/>
</dbReference>
<dbReference type="InterPro" id="IPR006369">
    <property type="entry name" value="Protohaem_IX_farnesylTrfase"/>
</dbReference>
<dbReference type="InterPro" id="IPR000537">
    <property type="entry name" value="UbiA_prenyltransferase"/>
</dbReference>
<dbReference type="InterPro" id="IPR044878">
    <property type="entry name" value="UbiA_sf"/>
</dbReference>
<dbReference type="NCBIfam" id="TIGR01473">
    <property type="entry name" value="cyoE_ctaB"/>
    <property type="match status" value="1"/>
</dbReference>
<dbReference type="PANTHER" id="PTHR43448">
    <property type="entry name" value="PROTOHEME IX FARNESYLTRANSFERASE, MITOCHONDRIAL"/>
    <property type="match status" value="1"/>
</dbReference>
<dbReference type="PANTHER" id="PTHR43448:SF2">
    <property type="entry name" value="PROTOHEME IX FARNESYLTRANSFERASE, MITOCHONDRIAL"/>
    <property type="match status" value="1"/>
</dbReference>
<dbReference type="Pfam" id="PF01040">
    <property type="entry name" value="UbiA"/>
    <property type="match status" value="1"/>
</dbReference>
<organism>
    <name type="scientific">Staphylococcus aureus (strain USA300 / TCH1516)</name>
    <dbReference type="NCBI Taxonomy" id="451516"/>
    <lineage>
        <taxon>Bacteria</taxon>
        <taxon>Bacillati</taxon>
        <taxon>Bacillota</taxon>
        <taxon>Bacilli</taxon>
        <taxon>Bacillales</taxon>
        <taxon>Staphylococcaceae</taxon>
        <taxon>Staphylococcus</taxon>
    </lineage>
</organism>
<keyword id="KW-1003">Cell membrane</keyword>
<keyword id="KW-0350">Heme biosynthesis</keyword>
<keyword id="KW-0472">Membrane</keyword>
<keyword id="KW-0808">Transferase</keyword>
<keyword id="KW-0812">Transmembrane</keyword>
<keyword id="KW-1133">Transmembrane helix</keyword>
<accession>A8Z1Q1</accession>
<gene>
    <name evidence="1" type="primary">ctaB</name>
    <name type="ordered locus">USA300HOU_1054</name>
</gene>
<evidence type="ECO:0000255" key="1">
    <source>
        <dbReference type="HAMAP-Rule" id="MF_00154"/>
    </source>
</evidence>